<proteinExistence type="inferred from homology"/>
<comment type="catalytic activity">
    <reaction evidence="1">
        <text>agmatine + H2O = N-carbamoylputrescine + NH4(+)</text>
        <dbReference type="Rhea" id="RHEA:18037"/>
        <dbReference type="ChEBI" id="CHEBI:15377"/>
        <dbReference type="ChEBI" id="CHEBI:28938"/>
        <dbReference type="ChEBI" id="CHEBI:58145"/>
        <dbReference type="ChEBI" id="CHEBI:58318"/>
        <dbReference type="EC" id="3.5.3.12"/>
    </reaction>
</comment>
<comment type="similarity">
    <text evidence="1">Belongs to the agmatine deiminase family.</text>
</comment>
<protein>
    <recommendedName>
        <fullName evidence="1">Putative agmatine deiminase</fullName>
        <ecNumber evidence="1">3.5.3.12</ecNumber>
    </recommendedName>
    <alternativeName>
        <fullName evidence="1">Agmatine iminohydrolase</fullName>
    </alternativeName>
</protein>
<keyword id="KW-0378">Hydrolase</keyword>
<sequence>MTNANVDATQLTTKPSQDGFYMPAEWAAQQAVWMIWPYRPDNWRSAGAYAQATFAKVADAIGGATPVYMGVPQAFLAEAQKVMPSHVTLVEIDSNDCWARDTGPTVVVNAEGECRGVDWGFNAWGGHNGGLYFPWDKDEQVAAQMLKQHGFARYSAPLILEGGSIHVDGEGTCMTTAECLLNANRNPDLTKEQIEALLRDYLNVKQFIWLEEGVYMDETDGHIDNMCCFARPGEVVLHWTDDETDPQYPRSKAALDVLQNTVDAQGRKLKIHLLPQPGPLYCTEEESKGVTEGTGVPRTAGERLAGSYVNFLITNDRIVFPLLDPATDDIAAQKLQDIFPEHKIVGVPAREILLGGGNIHCITQQIPSGK</sequence>
<name>AGUA_SHESR</name>
<feature type="chain" id="PRO_1000070573" description="Putative agmatine deiminase">
    <location>
        <begin position="1"/>
        <end position="370"/>
    </location>
</feature>
<feature type="active site" description="Amidino-cysteine intermediate" evidence="1">
    <location>
        <position position="361"/>
    </location>
</feature>
<gene>
    <name evidence="1" type="primary">aguA</name>
    <name type="ordered locus">Shewmr7_0659</name>
</gene>
<reference key="1">
    <citation type="submission" date="2006-08" db="EMBL/GenBank/DDBJ databases">
        <title>Complete sequence of chromosome 1 of Shewanella sp. MR-7.</title>
        <authorList>
            <person name="Copeland A."/>
            <person name="Lucas S."/>
            <person name="Lapidus A."/>
            <person name="Barry K."/>
            <person name="Detter J.C."/>
            <person name="Glavina del Rio T."/>
            <person name="Hammon N."/>
            <person name="Israni S."/>
            <person name="Dalin E."/>
            <person name="Tice H."/>
            <person name="Pitluck S."/>
            <person name="Kiss H."/>
            <person name="Brettin T."/>
            <person name="Bruce D."/>
            <person name="Han C."/>
            <person name="Tapia R."/>
            <person name="Gilna P."/>
            <person name="Schmutz J."/>
            <person name="Larimer F."/>
            <person name="Land M."/>
            <person name="Hauser L."/>
            <person name="Kyrpides N."/>
            <person name="Mikhailova N."/>
            <person name="Nealson K."/>
            <person name="Konstantinidis K."/>
            <person name="Klappenbach J."/>
            <person name="Tiedje J."/>
            <person name="Richardson P."/>
        </authorList>
    </citation>
    <scope>NUCLEOTIDE SEQUENCE [LARGE SCALE GENOMIC DNA]</scope>
    <source>
        <strain>MR-7</strain>
    </source>
</reference>
<evidence type="ECO:0000255" key="1">
    <source>
        <dbReference type="HAMAP-Rule" id="MF_01841"/>
    </source>
</evidence>
<dbReference type="EC" id="3.5.3.12" evidence="1"/>
<dbReference type="EMBL" id="CP000444">
    <property type="protein sequence ID" value="ABI41662.1"/>
    <property type="molecule type" value="Genomic_DNA"/>
</dbReference>
<dbReference type="SMR" id="Q0HYZ3"/>
<dbReference type="KEGG" id="shm:Shewmr7_0659"/>
<dbReference type="HOGENOM" id="CLU_037682_1_0_6"/>
<dbReference type="GO" id="GO:0047632">
    <property type="term" value="F:agmatine deiminase activity"/>
    <property type="evidence" value="ECO:0007669"/>
    <property type="project" value="UniProtKB-UniRule"/>
</dbReference>
<dbReference type="GO" id="GO:0004668">
    <property type="term" value="F:protein-arginine deiminase activity"/>
    <property type="evidence" value="ECO:0007669"/>
    <property type="project" value="InterPro"/>
</dbReference>
<dbReference type="GO" id="GO:0009446">
    <property type="term" value="P:putrescine biosynthetic process"/>
    <property type="evidence" value="ECO:0007669"/>
    <property type="project" value="InterPro"/>
</dbReference>
<dbReference type="Gene3D" id="3.75.10.10">
    <property type="entry name" value="L-arginine/glycine Amidinotransferase, Chain A"/>
    <property type="match status" value="1"/>
</dbReference>
<dbReference type="HAMAP" id="MF_01841">
    <property type="entry name" value="Agmatine_deimin"/>
    <property type="match status" value="1"/>
</dbReference>
<dbReference type="InterPro" id="IPR017754">
    <property type="entry name" value="Agmatine_deiminase"/>
</dbReference>
<dbReference type="InterPro" id="IPR007466">
    <property type="entry name" value="Peptidyl-Arg-deiminase_porph"/>
</dbReference>
<dbReference type="NCBIfam" id="TIGR03380">
    <property type="entry name" value="agmatine_aguA"/>
    <property type="match status" value="1"/>
</dbReference>
<dbReference type="NCBIfam" id="NF010070">
    <property type="entry name" value="PRK13551.1"/>
    <property type="match status" value="1"/>
</dbReference>
<dbReference type="PANTHER" id="PTHR31377">
    <property type="entry name" value="AGMATINE DEIMINASE-RELATED"/>
    <property type="match status" value="1"/>
</dbReference>
<dbReference type="PANTHER" id="PTHR31377:SF0">
    <property type="entry name" value="AGMATINE DEIMINASE-RELATED"/>
    <property type="match status" value="1"/>
</dbReference>
<dbReference type="Pfam" id="PF04371">
    <property type="entry name" value="PAD_porph"/>
    <property type="match status" value="1"/>
</dbReference>
<dbReference type="SUPFAM" id="SSF55909">
    <property type="entry name" value="Pentein"/>
    <property type="match status" value="1"/>
</dbReference>
<organism>
    <name type="scientific">Shewanella sp. (strain MR-7)</name>
    <dbReference type="NCBI Taxonomy" id="60481"/>
    <lineage>
        <taxon>Bacteria</taxon>
        <taxon>Pseudomonadati</taxon>
        <taxon>Pseudomonadota</taxon>
        <taxon>Gammaproteobacteria</taxon>
        <taxon>Alteromonadales</taxon>
        <taxon>Shewanellaceae</taxon>
        <taxon>Shewanella</taxon>
    </lineage>
</organism>
<accession>Q0HYZ3</accession>